<proteinExistence type="evidence at protein level"/>
<reference key="1">
    <citation type="journal article" date="2014" name="Plant Cell Physiol.">
        <title>Two ginseng UDP-glycosyltransferases synthesize ginsenoside Rg3 and Rd.</title>
        <authorList>
            <person name="Jung S.-C."/>
            <person name="Kim W."/>
            <person name="Park S.C."/>
            <person name="Jeong J."/>
            <person name="Park M.K."/>
            <person name="Lim S."/>
            <person name="Lee Y."/>
            <person name="Im W.-T."/>
            <person name="Lee J.H."/>
            <person name="Choi G."/>
            <person name="Kim S.C."/>
        </authorList>
    </citation>
    <scope>NUCLEOTIDE SEQUENCE [GENOMIC DNA]</scope>
    <scope>FUNCTION</scope>
    <scope>CATALYTIC ACTIVITY</scope>
    <scope>TISSUE SPECIFICITY</scope>
    <scope>BIOPHYSICOCHEMICAL PROPERTIES</scope>
    <scope>INDUCTION BY METHYL JASMONATE</scope>
</reference>
<reference key="2">
    <citation type="journal article" date="2016" name="J. Biotechnol.">
        <title>Fungal elicitors enhance ginsenosides biosynthesis, expression of functional genes as well as signal molecules accumulation in adventitious roots of Panax ginseng C. A. Mey.</title>
        <authorList>
            <person name="Li J."/>
            <person name="Liu S."/>
            <person name="Wang J."/>
            <person name="Li J."/>
            <person name="Liu D."/>
            <person name="Li J."/>
            <person name="Gao W."/>
        </authorList>
    </citation>
    <scope>FUNCTION</scope>
    <scope>INDUCTION BY ASPERGILLUS NIGER</scope>
</reference>
<reference key="3">
    <citation type="journal article" date="2018" name="Biotechnol. Appl. Biochem.">
        <title>Advances in ginsenoside biosynthesis and metabolic regulation.</title>
        <authorList>
            <person name="Lu J."/>
            <person name="Li J."/>
            <person name="Wang S."/>
            <person name="Yao L."/>
            <person name="Liang W."/>
            <person name="Wang J."/>
            <person name="Gao W."/>
        </authorList>
    </citation>
    <scope>REVIEW</scope>
</reference>
<reference key="4">
    <citation type="journal article" date="2018" name="Molecules">
        <title>Progress on the studies of the key enzymes of ginsenoside biosynthesis.</title>
        <authorList>
            <person name="Yang J.-L."/>
            <person name="Hu Z.-F."/>
            <person name="Zhang T.-T."/>
            <person name="Gu A.-D."/>
            <person name="Gong T."/>
            <person name="Zhu P."/>
        </authorList>
    </citation>
    <scope>REVIEW</scope>
    <scope>NOMENCLATURE</scope>
</reference>
<dbReference type="EC" id="2.4.1.364" evidence="3"/>
<dbReference type="EMBL" id="JX898529">
    <property type="protein sequence ID" value="AGR44631.1"/>
    <property type="molecule type" value="Genomic_DNA"/>
</dbReference>
<dbReference type="SMR" id="A0A0A6ZFR4"/>
<dbReference type="KEGG" id="ag:AGR44631"/>
<dbReference type="BioCyc" id="MetaCyc:MONOMER-20533"/>
<dbReference type="BRENDA" id="2.4.1.364">
    <property type="organism ID" value="7895"/>
</dbReference>
<dbReference type="UniPathway" id="UPA00213"/>
<dbReference type="GO" id="GO:0080043">
    <property type="term" value="F:quercetin 3-O-glucosyltransferase activity"/>
    <property type="evidence" value="ECO:0007669"/>
    <property type="project" value="TreeGrafter"/>
</dbReference>
<dbReference type="GO" id="GO:0080044">
    <property type="term" value="F:quercetin 7-O-glucosyltransferase activity"/>
    <property type="evidence" value="ECO:0007669"/>
    <property type="project" value="TreeGrafter"/>
</dbReference>
<dbReference type="GO" id="GO:0008194">
    <property type="term" value="F:UDP-glycosyltransferase activity"/>
    <property type="evidence" value="ECO:0000314"/>
    <property type="project" value="UniProtKB"/>
</dbReference>
<dbReference type="GO" id="GO:0002238">
    <property type="term" value="P:response to molecule of fungal origin"/>
    <property type="evidence" value="ECO:0000270"/>
    <property type="project" value="UniProtKB"/>
</dbReference>
<dbReference type="GO" id="GO:0016135">
    <property type="term" value="P:saponin biosynthetic process"/>
    <property type="evidence" value="ECO:0000314"/>
    <property type="project" value="UniProtKB"/>
</dbReference>
<dbReference type="GO" id="GO:0046246">
    <property type="term" value="P:terpene biosynthetic process"/>
    <property type="evidence" value="ECO:0000314"/>
    <property type="project" value="UniProtKB"/>
</dbReference>
<dbReference type="GO" id="GO:0016114">
    <property type="term" value="P:terpenoid biosynthetic process"/>
    <property type="evidence" value="ECO:0007669"/>
    <property type="project" value="UniProtKB-UniPathway"/>
</dbReference>
<dbReference type="CDD" id="cd03784">
    <property type="entry name" value="GT1_Gtf-like"/>
    <property type="match status" value="1"/>
</dbReference>
<dbReference type="FunFam" id="3.40.50.2000:FF:000019">
    <property type="entry name" value="Glycosyltransferase"/>
    <property type="match status" value="1"/>
</dbReference>
<dbReference type="Gene3D" id="3.40.50.2000">
    <property type="entry name" value="Glycogen Phosphorylase B"/>
    <property type="match status" value="2"/>
</dbReference>
<dbReference type="InterPro" id="IPR002213">
    <property type="entry name" value="UDP_glucos_trans"/>
</dbReference>
<dbReference type="PANTHER" id="PTHR11926">
    <property type="entry name" value="GLUCOSYL/GLUCURONOSYL TRANSFERASES"/>
    <property type="match status" value="1"/>
</dbReference>
<dbReference type="PANTHER" id="PTHR11926:SF1560">
    <property type="entry name" value="UDP-GLYCOSYLTRANSFERASE 74E1-RELATED"/>
    <property type="match status" value="1"/>
</dbReference>
<dbReference type="Pfam" id="PF00201">
    <property type="entry name" value="UDPGT"/>
    <property type="match status" value="1"/>
</dbReference>
<dbReference type="SUPFAM" id="SSF53756">
    <property type="entry name" value="UDP-Glycosyltransferase/glycogen phosphorylase"/>
    <property type="match status" value="1"/>
</dbReference>
<keyword id="KW-0414">Isoprene biosynthesis</keyword>
<keyword id="KW-0808">Transferase</keyword>
<evidence type="ECO:0000250" key="1">
    <source>
        <dbReference type="UniProtKB" id="A0A0A1HA03"/>
    </source>
</evidence>
<evidence type="ECO:0000250" key="2">
    <source>
        <dbReference type="UniProtKB" id="P51094"/>
    </source>
</evidence>
<evidence type="ECO:0000269" key="3">
    <source>
    </source>
</evidence>
<evidence type="ECO:0000269" key="4">
    <source>
    </source>
</evidence>
<evidence type="ECO:0000303" key="5">
    <source>
    </source>
</evidence>
<evidence type="ECO:0000303" key="6">
    <source>
    </source>
</evidence>
<evidence type="ECO:0000303" key="7">
    <source>
    </source>
</evidence>
<evidence type="ECO:0000303" key="8">
    <source>
    </source>
</evidence>
<evidence type="ECO:0000305" key="9"/>
<accession>A0A0A6ZFR4</accession>
<gene>
    <name evidence="5 6" type="primary">UGT74AE2</name>
    <name evidence="5" type="synonym">UGT74A1</name>
</gene>
<feature type="chain" id="PRO_0000446961" description="UDP-glucosyltransferase 74AE2">
    <location>
        <begin position="1"/>
        <end position="451"/>
    </location>
</feature>
<feature type="active site" description="Proton acceptor" evidence="1">
    <location>
        <position position="17"/>
    </location>
</feature>
<feature type="active site" description="Charge relay" evidence="1">
    <location>
        <position position="108"/>
    </location>
</feature>
<feature type="binding site" evidence="2">
    <location>
        <position position="17"/>
    </location>
    <ligand>
        <name>an anthocyanidin</name>
        <dbReference type="ChEBI" id="CHEBI:143576"/>
    </ligand>
</feature>
<feature type="binding site" evidence="1">
    <location>
        <position position="130"/>
    </location>
    <ligand>
        <name>UDP-alpha-D-glucose</name>
        <dbReference type="ChEBI" id="CHEBI:58885"/>
    </ligand>
</feature>
<feature type="binding site" evidence="1">
    <location>
        <position position="330"/>
    </location>
    <ligand>
        <name>UDP-alpha-D-glucose</name>
        <dbReference type="ChEBI" id="CHEBI:58885"/>
    </ligand>
</feature>
<feature type="binding site" evidence="1">
    <location>
        <position position="345"/>
    </location>
    <ligand>
        <name>UDP-alpha-D-glucose</name>
        <dbReference type="ChEBI" id="CHEBI:58885"/>
    </ligand>
</feature>
<feature type="binding site" evidence="1">
    <location>
        <position position="348"/>
    </location>
    <ligand>
        <name>UDP-alpha-D-glucose</name>
        <dbReference type="ChEBI" id="CHEBI:58885"/>
    </ligand>
</feature>
<feature type="binding site" evidence="1">
    <location>
        <position position="349"/>
    </location>
    <ligand>
        <name>UDP-alpha-D-glucose</name>
        <dbReference type="ChEBI" id="CHEBI:58885"/>
    </ligand>
</feature>
<feature type="binding site" evidence="1">
    <location>
        <position position="350"/>
    </location>
    <ligand>
        <name>UDP-alpha-D-glucose</name>
        <dbReference type="ChEBI" id="CHEBI:58885"/>
    </ligand>
</feature>
<feature type="binding site" evidence="1">
    <location>
        <position position="353"/>
    </location>
    <ligand>
        <name>UDP-alpha-D-glucose</name>
        <dbReference type="ChEBI" id="CHEBI:58885"/>
    </ligand>
</feature>
<feature type="binding site" evidence="1">
    <location>
        <position position="369"/>
    </location>
    <ligand>
        <name>UDP-alpha-D-glucose</name>
        <dbReference type="ChEBI" id="CHEBI:58885"/>
    </ligand>
</feature>
<feature type="binding site" evidence="1">
    <location>
        <position position="370"/>
    </location>
    <ligand>
        <name>UDP-alpha-D-glucose</name>
        <dbReference type="ChEBI" id="CHEBI:58885"/>
    </ligand>
</feature>
<comment type="function">
    <text evidence="3 4 7">Component of the dammarane-type triterpene saponins (e.g. PPD-type ginsenosides or panaxosides) biosynthetic pathway (PubMed:25320211, PubMed:27746309, PubMed:29378087). Glycosyltransferase that catalyzes the biosynthesis of ginsenoside Rh2 from protopanaxadiol (PPD) and the conversion of compound K to ginsenoside F2 (PubMed:25320211, PubMed:27746309).</text>
</comment>
<comment type="catalytic activity">
    <reaction evidence="3">
        <text>(20S)-ginsenoside C-K + UDP-alpha-D-glucose = (20S)-ginsenoside F2 + UDP + H(+)</text>
        <dbReference type="Rhea" id="RHEA:57992"/>
        <dbReference type="ChEBI" id="CHEBI:15378"/>
        <dbReference type="ChEBI" id="CHEBI:58223"/>
        <dbReference type="ChEBI" id="CHEBI:58885"/>
        <dbReference type="ChEBI" id="CHEBI:77145"/>
        <dbReference type="ChEBI" id="CHEBI:77146"/>
        <dbReference type="EC" id="2.4.1.364"/>
    </reaction>
    <physiologicalReaction direction="left-to-right" evidence="3">
        <dbReference type="Rhea" id="RHEA:57993"/>
    </physiologicalReaction>
</comment>
<comment type="catalytic activity">
    <reaction evidence="3">
        <text>(20S)-protopanaxadiol + UDP-alpha-D-glucose = (20S)-ginsenoside Rh2 + UDP + H(+)</text>
        <dbReference type="Rhea" id="RHEA:57996"/>
        <dbReference type="ChEBI" id="CHEBI:15378"/>
        <dbReference type="ChEBI" id="CHEBI:58223"/>
        <dbReference type="ChEBI" id="CHEBI:58885"/>
        <dbReference type="ChEBI" id="CHEBI:75950"/>
        <dbReference type="ChEBI" id="CHEBI:77147"/>
        <dbReference type="EC" id="2.4.1.364"/>
    </reaction>
    <physiologicalReaction direction="left-to-right" evidence="3">
        <dbReference type="Rhea" id="RHEA:57997"/>
    </physiologicalReaction>
</comment>
<comment type="biophysicochemical properties">
    <kinetics>
        <KM evidence="3">25 uM for protopanaxadiol (at pH 7 and 35 degrees Celsius)</KM>
        <KM evidence="3">40 uM for compound K (at pH 7 and 35 degrees Celsius)</KM>
        <text evidence="3">kcat is 55.6 usec(-1) with protopanaxadiol as substrate (at pH 7 and 35 degrees Celsius). kcat is 134.7 usec(-1) with compound K as substrate (at pH 7 and 35 degrees Celsius).</text>
    </kinetics>
</comment>
<comment type="pathway">
    <text evidence="9">Secondary metabolite biosynthesis; terpenoid biosynthesis.</text>
</comment>
<comment type="tissue specificity">
    <text evidence="3">Expressed at higher levels in roots than in leaves.</text>
</comment>
<comment type="induction">
    <text evidence="3 4">Induced by methyl jasmonate (MeJA) in roots and leaves (PubMed:25320211). Induced by A.niger mycelium-derived elicitor, thus improving ginsenosides production in adventitious roots culture (PubMed:27746309).</text>
</comment>
<comment type="similarity">
    <text evidence="9">Belongs to the UDP-glycosyltransferase family.</text>
</comment>
<sequence>MLSKTHIMFIPFPAQGHMSPMMQFAKRLAWKGVRITIVLPAQIRDSMQITNSLINTECISFDFDKDDGMPYSMQAYMGVVKLKVTNKLSDLLEKQKTNGYPVNLLVVDSLYPSRVEMCHQLGVKGAPFFTHSCAVGAIYYNAHLGKLKIPPEEGLTSVSLPSIPLLGRDDLPIIRTGTFPDLFEHLGNQFSDLDKADWIFFNTFDKLENEEAKWLSSQWPITSIGPLIPSMYLDKQLPNDKGNGINLYKADVGSCIKWLDAKDPGSVVYASFGSVKHNFGDDYMDEVAWGLLHSKYNFIWVVIEPERTKLSSDFLAEAEEKGLIVSWCPQLEVLSHKSIGSFMTHCGWNSTVEALSLGVPMVAVPQQFDQPVNAKYIVDVWQIGVRVPIGEDGVVLRGEVANCIKDVMEGEIGDELRGNALKWKGLAVEAMEKGGSSDKNIDEFISKLVSS</sequence>
<organism>
    <name type="scientific">Panax ginseng</name>
    <name type="common">Korean ginseng</name>
    <dbReference type="NCBI Taxonomy" id="4054"/>
    <lineage>
        <taxon>Eukaryota</taxon>
        <taxon>Viridiplantae</taxon>
        <taxon>Streptophyta</taxon>
        <taxon>Embryophyta</taxon>
        <taxon>Tracheophyta</taxon>
        <taxon>Spermatophyta</taxon>
        <taxon>Magnoliopsida</taxon>
        <taxon>eudicotyledons</taxon>
        <taxon>Gunneridae</taxon>
        <taxon>Pentapetalae</taxon>
        <taxon>asterids</taxon>
        <taxon>campanulids</taxon>
        <taxon>Apiales</taxon>
        <taxon>Araliaceae</taxon>
        <taxon>Panax</taxon>
    </lineage>
</organism>
<name>U74AE_PANGI</name>
<protein>
    <recommendedName>
        <fullName evidence="5 6">UDP-glucosyltransferase 74AE2</fullName>
        <shortName evidence="6 8">PgUGT74AE2</shortName>
        <ecNumber evidence="3">2.4.1.364</ecNumber>
    </recommendedName>
    <alternativeName>
        <fullName evidence="6">UDP-glucosyltransferase 74A1</fullName>
        <shortName evidence="5">PgUGT74A1</shortName>
    </alternativeName>
</protein>